<gene>
    <name evidence="3" type="primary">eIF3d1</name>
    <name type="synonym">eIF-3p66</name>
    <name type="ORF">GE10378</name>
</gene>
<feature type="chain" id="PRO_0000364164" description="Eukaryotic translation initiation factor 3 subunit D-1">
    <location>
        <begin position="1"/>
        <end position="560"/>
    </location>
</feature>
<feature type="region of interest" description="Disordered" evidence="4">
    <location>
        <begin position="98"/>
        <end position="166"/>
    </location>
</feature>
<feature type="region of interest" description="RNA gate" evidence="2">
    <location>
        <begin position="291"/>
        <end position="305"/>
    </location>
</feature>
<feature type="compositionally biased region" description="Basic residues" evidence="4">
    <location>
        <begin position="100"/>
        <end position="121"/>
    </location>
</feature>
<feature type="compositionally biased region" description="Basic residues" evidence="4">
    <location>
        <begin position="147"/>
        <end position="156"/>
    </location>
</feature>
<feature type="modified residue" description="Phosphothreonine" evidence="1">
    <location>
        <position position="128"/>
    </location>
</feature>
<evidence type="ECO:0000250" key="1"/>
<evidence type="ECO:0000250" key="2">
    <source>
        <dbReference type="UniProtKB" id="K7IM66"/>
    </source>
</evidence>
<evidence type="ECO:0000255" key="3">
    <source>
        <dbReference type="HAMAP-Rule" id="MF_03003"/>
    </source>
</evidence>
<evidence type="ECO:0000256" key="4">
    <source>
        <dbReference type="SAM" id="MobiDB-lite"/>
    </source>
</evidence>
<comment type="function">
    <text evidence="3">mRNA cap-binding component of the eukaryotic translation initiation factor 3 (eIF-3) complex, which is involved in protein synthesis of a specialized repertoire of mRNAs and, together with other initiation factors, stimulates binding of mRNA and methionyl-tRNAi to the 40S ribosome. The eIF-3 complex specifically targets and initiates translation of a subset of mRNAs involved in cell proliferation. In the eIF-3 complex, eif3d specifically recognizes and binds the 7-methylguanosine cap of a subset of mRNAs.</text>
</comment>
<comment type="subunit">
    <text evidence="3">Component of the eukaryotic translation initiation factor 3 (eIF-3) complex. The eIF-3 complex interacts with pix.</text>
</comment>
<comment type="subcellular location">
    <subcellularLocation>
        <location evidence="3">Cytoplasm</location>
    </subcellularLocation>
</comment>
<comment type="domain">
    <text evidence="3">The RNA gate region regulates mRNA cap recognition to prevent promiscuous mRNA-binding before assembly of eif3d into the full eukaryotic translation initiation factor 3 (eIF-3) complex.</text>
</comment>
<comment type="similarity">
    <text evidence="3">Belongs to the eIF-3 subunit D family.</text>
</comment>
<accession>B4PNV2</accession>
<reference key="1">
    <citation type="journal article" date="2007" name="Nature">
        <title>Evolution of genes and genomes on the Drosophila phylogeny.</title>
        <authorList>
            <consortium name="Drosophila 12 genomes consortium"/>
        </authorList>
    </citation>
    <scope>NUCLEOTIDE SEQUENCE [LARGE SCALE GENOMIC DNA]</scope>
    <source>
        <strain>Tai18E2 / Tucson 14021-0261.01</strain>
    </source>
</reference>
<protein>
    <recommendedName>
        <fullName evidence="3">Eukaryotic translation initiation factor 3 subunit D-1</fullName>
        <shortName evidence="3">eIF3d-1</shortName>
    </recommendedName>
    <alternativeName>
        <fullName evidence="3">Eukaryotic translation initiation factor 3 subunit 7-1</fullName>
    </alternativeName>
    <alternativeName>
        <fullName>Eukaryotic translation initiation factor 3 subunit p66</fullName>
    </alternativeName>
</protein>
<dbReference type="EMBL" id="CM000160">
    <property type="protein sequence ID" value="EDW98162.1"/>
    <property type="molecule type" value="Genomic_DNA"/>
</dbReference>
<dbReference type="SMR" id="B4PNV2"/>
<dbReference type="EnsemblMetazoa" id="FBtr0256896">
    <property type="protein sequence ID" value="FBpp0255388"/>
    <property type="gene ID" value="FBgn0228244"/>
</dbReference>
<dbReference type="EnsemblMetazoa" id="XM_002098414.3">
    <property type="protein sequence ID" value="XP_002098450.1"/>
    <property type="gene ID" value="LOC6537910"/>
</dbReference>
<dbReference type="GeneID" id="6537910"/>
<dbReference type="KEGG" id="dya:Dyak_GE10378"/>
<dbReference type="CTD" id="42789"/>
<dbReference type="eggNOG" id="KOG2479">
    <property type="taxonomic scope" value="Eukaryota"/>
</dbReference>
<dbReference type="HOGENOM" id="CLU_024521_2_0_1"/>
<dbReference type="OMA" id="FMDKRDN"/>
<dbReference type="OrthoDB" id="16538at2759"/>
<dbReference type="PhylomeDB" id="B4PNV2"/>
<dbReference type="ChiTaRS" id="eIF-3p66">
    <property type="organism name" value="fly"/>
</dbReference>
<dbReference type="Proteomes" id="UP000002282">
    <property type="component" value="Chromosome 3R"/>
</dbReference>
<dbReference type="GO" id="GO:0016282">
    <property type="term" value="C:eukaryotic 43S preinitiation complex"/>
    <property type="evidence" value="ECO:0007669"/>
    <property type="project" value="UniProtKB-UniRule"/>
</dbReference>
<dbReference type="GO" id="GO:0033290">
    <property type="term" value="C:eukaryotic 48S preinitiation complex"/>
    <property type="evidence" value="ECO:0007669"/>
    <property type="project" value="UniProtKB-UniRule"/>
</dbReference>
<dbReference type="GO" id="GO:0005852">
    <property type="term" value="C:eukaryotic translation initiation factor 3 complex"/>
    <property type="evidence" value="ECO:0000250"/>
    <property type="project" value="UniProtKB"/>
</dbReference>
<dbReference type="GO" id="GO:0005634">
    <property type="term" value="C:nucleus"/>
    <property type="evidence" value="ECO:0007669"/>
    <property type="project" value="EnsemblMetazoa"/>
</dbReference>
<dbReference type="GO" id="GO:0098808">
    <property type="term" value="F:mRNA cap binding"/>
    <property type="evidence" value="ECO:0007669"/>
    <property type="project" value="UniProtKB-UniRule"/>
</dbReference>
<dbReference type="GO" id="GO:0003743">
    <property type="term" value="F:translation initiation factor activity"/>
    <property type="evidence" value="ECO:0000250"/>
    <property type="project" value="UniProtKB"/>
</dbReference>
<dbReference type="GO" id="GO:0002191">
    <property type="term" value="P:cap-dependent translational initiation"/>
    <property type="evidence" value="ECO:0007669"/>
    <property type="project" value="UniProtKB-UniRule"/>
</dbReference>
<dbReference type="GO" id="GO:0001732">
    <property type="term" value="P:formation of cytoplasmic translation initiation complex"/>
    <property type="evidence" value="ECO:0007669"/>
    <property type="project" value="UniProtKB-UniRule"/>
</dbReference>
<dbReference type="GO" id="GO:0006446">
    <property type="term" value="P:regulation of translational initiation"/>
    <property type="evidence" value="ECO:0000250"/>
    <property type="project" value="UniProtKB"/>
</dbReference>
<dbReference type="HAMAP" id="MF_03003">
    <property type="entry name" value="eIF3d"/>
    <property type="match status" value="1"/>
</dbReference>
<dbReference type="InterPro" id="IPR007783">
    <property type="entry name" value="eIF3d"/>
</dbReference>
<dbReference type="PANTHER" id="PTHR12399">
    <property type="entry name" value="EUKARYOTIC TRANSLATION INITIATION FACTOR 3 SUBUNIT 7"/>
    <property type="match status" value="1"/>
</dbReference>
<dbReference type="PANTHER" id="PTHR12399:SF0">
    <property type="entry name" value="EUKARYOTIC TRANSLATION INITIATION FACTOR 3 SUBUNIT D"/>
    <property type="match status" value="1"/>
</dbReference>
<dbReference type="Pfam" id="PF05091">
    <property type="entry name" value="eIF-3_zeta"/>
    <property type="match status" value="1"/>
</dbReference>
<dbReference type="PIRSF" id="PIRSF016281">
    <property type="entry name" value="EIF-3_zeta"/>
    <property type="match status" value="1"/>
</dbReference>
<sequence length="560" mass="63788">MSETINTAAQFPSFEKPTVQFNEKGWGPCELPDTFKDVPYQPFSKNDRLGKICDWTNTSNNDKKYQNKYASSFGTGNQYSYYHEEDETTFHLVDTARVQKPPHQRGRFRNMRNSRSGRGRNARGGLNTHGMTTLSGKNVKARDPRHGRGMGKKFGHRGPPPKMRESSVAVRADWASIEEMDFPRLIKLSLPNIKEGVDIVTCGTLEYYDKTYDRINVKNEKPLQKIDRIVHTVTTTDDPVIRRLSKTVGNVFATDAILATIMCSTRSNYSWDIVIEKVGDKIFMDKRDHTEFDLLTVNESSVEPPTDDDSSCNSPRNLAIEATFINHNFSQQVLKTGDQEPKYKFEESNPFISEDEDIQVASVGYRYKKWELGSDIVLVARCEHDGVLQTPSGDSQFMTIKALNEWDSKLANGVEWRQKLDTQRGAVLANELRNNACKLAKWTVQAVLAGSDQLKLGYVSRINPRDHSRHVILGTQQFKPHEFATQINLSMDNAWGILRCIIDLVMKQKDGKYLIMKDPNKPIIRLYDIPDNTFDSDDSDDGEGDDEGFQQVYNYAHNKI</sequence>
<organism>
    <name type="scientific">Drosophila yakuba</name>
    <name type="common">Fruit fly</name>
    <dbReference type="NCBI Taxonomy" id="7245"/>
    <lineage>
        <taxon>Eukaryota</taxon>
        <taxon>Metazoa</taxon>
        <taxon>Ecdysozoa</taxon>
        <taxon>Arthropoda</taxon>
        <taxon>Hexapoda</taxon>
        <taxon>Insecta</taxon>
        <taxon>Pterygota</taxon>
        <taxon>Neoptera</taxon>
        <taxon>Endopterygota</taxon>
        <taxon>Diptera</taxon>
        <taxon>Brachycera</taxon>
        <taxon>Muscomorpha</taxon>
        <taxon>Ephydroidea</taxon>
        <taxon>Drosophilidae</taxon>
        <taxon>Drosophila</taxon>
        <taxon>Sophophora</taxon>
    </lineage>
</organism>
<name>EI3D1_DROYA</name>
<proteinExistence type="inferred from homology"/>
<keyword id="KW-0963">Cytoplasm</keyword>
<keyword id="KW-0396">Initiation factor</keyword>
<keyword id="KW-0597">Phosphoprotein</keyword>
<keyword id="KW-0648">Protein biosynthesis</keyword>
<keyword id="KW-0694">RNA-binding</keyword>